<feature type="chain" id="PRO_0000402148" description="Augerpeptide hhe9.2">
    <location>
        <begin position="1"/>
        <end position="43"/>
    </location>
</feature>
<feature type="domain" description="EGF-like">
    <location>
        <begin position="2"/>
        <end position="40"/>
    </location>
</feature>
<feature type="disulfide bond" evidence="1">
    <location>
        <begin position="6"/>
        <end position="28"/>
    </location>
</feature>
<feature type="disulfide bond" evidence="1">
    <location>
        <begin position="11"/>
        <end position="30"/>
    </location>
</feature>
<feature type="disulfide bond" evidence="1">
    <location>
        <begin position="17"/>
        <end position="39"/>
    </location>
</feature>
<keyword id="KW-1015">Disulfide bond</keyword>
<keyword id="KW-0964">Secreted</keyword>
<keyword id="KW-0800">Toxin</keyword>
<accession>P0CI15</accession>
<reference key="1">
    <citation type="journal article" date="2007" name="J. Exp. Zool. B Mol. Dev. Evol.">
        <title>Venomous auger snail Hastula (Impages) hectica (Linnaeus, 1758): molecular phylogeny, foregut anatomy and comparative toxinology.</title>
        <authorList>
            <person name="Imperial J.S."/>
            <person name="Kantor Y."/>
            <person name="Watkins M."/>
            <person name="Heralde F.M. III"/>
            <person name="Stevenson B."/>
            <person name="Chen P."/>
            <person name="Hansson K."/>
            <person name="Stenflo J."/>
            <person name="Ownby J.P."/>
            <person name="Bouchet P."/>
            <person name="Olivera B.M."/>
        </authorList>
    </citation>
    <scope>NUCLEOTIDE SEQUENCE [MRNA]</scope>
    <source>
        <tissue>Venom duct</tissue>
    </source>
</reference>
<proteinExistence type="evidence at transcript level"/>
<organism>
    <name type="scientific">Hastula hectica</name>
    <name type="common">Sea snail</name>
    <name type="synonym">Impages hectica</name>
    <dbReference type="NCBI Taxonomy" id="745793"/>
    <lineage>
        <taxon>Eukaryota</taxon>
        <taxon>Metazoa</taxon>
        <taxon>Spiralia</taxon>
        <taxon>Lophotrochozoa</taxon>
        <taxon>Mollusca</taxon>
        <taxon>Gastropoda</taxon>
        <taxon>Caenogastropoda</taxon>
        <taxon>Neogastropoda</taxon>
        <taxon>Conoidea</taxon>
        <taxon>Terebridae</taxon>
        <taxon>Hastula</taxon>
    </lineage>
</organism>
<sequence>DEEVGCFPNVCKNDGNCSIETSTGMTRCQCLEGYTGHVCENPL</sequence>
<name>TE92_HASHE</name>
<protein>
    <recommendedName>
        <fullName>Augerpeptide hhe9.2</fullName>
    </recommendedName>
</protein>
<evidence type="ECO:0000250" key="1"/>
<dbReference type="SMR" id="P0CI15"/>
<dbReference type="GO" id="GO:0005576">
    <property type="term" value="C:extracellular region"/>
    <property type="evidence" value="ECO:0007669"/>
    <property type="project" value="UniProtKB-SubCell"/>
</dbReference>
<dbReference type="GO" id="GO:0090729">
    <property type="term" value="F:toxin activity"/>
    <property type="evidence" value="ECO:0007669"/>
    <property type="project" value="UniProtKB-KW"/>
</dbReference>
<dbReference type="Gene3D" id="2.10.25.10">
    <property type="entry name" value="Laminin"/>
    <property type="match status" value="1"/>
</dbReference>
<dbReference type="InterPro" id="IPR000742">
    <property type="entry name" value="EGF-like_dom"/>
</dbReference>
<dbReference type="Pfam" id="PF00008">
    <property type="entry name" value="EGF"/>
    <property type="match status" value="1"/>
</dbReference>
<dbReference type="SUPFAM" id="SSF57196">
    <property type="entry name" value="EGF/Laminin"/>
    <property type="match status" value="1"/>
</dbReference>
<comment type="subcellular location">
    <subcellularLocation>
        <location evidence="1">Secreted</location>
    </subcellularLocation>
</comment>
<comment type="tissue specificity">
    <text>Expressed by the venom duct.</text>
</comment>
<comment type="domain">
    <text>The cysteine framework is IX (C-C-C-C-C-C).</text>
</comment>